<gene>
    <name evidence="1" type="primary">mobA</name>
    <name type="ordered locus">Psyr_2135</name>
</gene>
<proteinExistence type="inferred from homology"/>
<keyword id="KW-0963">Cytoplasm</keyword>
<keyword id="KW-0342">GTP-binding</keyword>
<keyword id="KW-0460">Magnesium</keyword>
<keyword id="KW-0479">Metal-binding</keyword>
<keyword id="KW-0501">Molybdenum cofactor biosynthesis</keyword>
<keyword id="KW-0547">Nucleotide-binding</keyword>
<keyword id="KW-0808">Transferase</keyword>
<dbReference type="EC" id="2.7.7.77" evidence="1"/>
<dbReference type="EMBL" id="CP000075">
    <property type="protein sequence ID" value="AAY37178.1"/>
    <property type="molecule type" value="Genomic_DNA"/>
</dbReference>
<dbReference type="RefSeq" id="WP_011267454.1">
    <property type="nucleotide sequence ID" value="NC_007005.1"/>
</dbReference>
<dbReference type="RefSeq" id="YP_235216.1">
    <property type="nucleotide sequence ID" value="NC_007005.1"/>
</dbReference>
<dbReference type="SMR" id="Q4ZUJ4"/>
<dbReference type="STRING" id="205918.Psyr_2135"/>
<dbReference type="KEGG" id="psb:Psyr_2135"/>
<dbReference type="PATRIC" id="fig|205918.7.peg.2183"/>
<dbReference type="eggNOG" id="COG0746">
    <property type="taxonomic scope" value="Bacteria"/>
</dbReference>
<dbReference type="HOGENOM" id="CLU_055597_5_1_6"/>
<dbReference type="OrthoDB" id="9788394at2"/>
<dbReference type="Proteomes" id="UP000000426">
    <property type="component" value="Chromosome"/>
</dbReference>
<dbReference type="GO" id="GO:0005737">
    <property type="term" value="C:cytoplasm"/>
    <property type="evidence" value="ECO:0007669"/>
    <property type="project" value="UniProtKB-SubCell"/>
</dbReference>
<dbReference type="GO" id="GO:0005525">
    <property type="term" value="F:GTP binding"/>
    <property type="evidence" value="ECO:0007669"/>
    <property type="project" value="UniProtKB-UniRule"/>
</dbReference>
<dbReference type="GO" id="GO:0046872">
    <property type="term" value="F:metal ion binding"/>
    <property type="evidence" value="ECO:0007669"/>
    <property type="project" value="UniProtKB-KW"/>
</dbReference>
<dbReference type="GO" id="GO:0061603">
    <property type="term" value="F:molybdenum cofactor guanylyltransferase activity"/>
    <property type="evidence" value="ECO:0007669"/>
    <property type="project" value="UniProtKB-EC"/>
</dbReference>
<dbReference type="GO" id="GO:1902758">
    <property type="term" value="P:bis(molybdopterin guanine dinucleotide)molybdenum biosynthetic process"/>
    <property type="evidence" value="ECO:0007669"/>
    <property type="project" value="TreeGrafter"/>
</dbReference>
<dbReference type="CDD" id="cd02503">
    <property type="entry name" value="MobA"/>
    <property type="match status" value="1"/>
</dbReference>
<dbReference type="Gene3D" id="3.90.550.10">
    <property type="entry name" value="Spore Coat Polysaccharide Biosynthesis Protein SpsA, Chain A"/>
    <property type="match status" value="1"/>
</dbReference>
<dbReference type="HAMAP" id="MF_00316">
    <property type="entry name" value="MobA"/>
    <property type="match status" value="1"/>
</dbReference>
<dbReference type="InterPro" id="IPR025877">
    <property type="entry name" value="MobA-like_NTP_Trfase"/>
</dbReference>
<dbReference type="InterPro" id="IPR013482">
    <property type="entry name" value="Molybde_CF_guanTrfase"/>
</dbReference>
<dbReference type="InterPro" id="IPR029044">
    <property type="entry name" value="Nucleotide-diphossugar_trans"/>
</dbReference>
<dbReference type="NCBIfam" id="TIGR02665">
    <property type="entry name" value="molyb_mobA"/>
    <property type="match status" value="1"/>
</dbReference>
<dbReference type="PANTHER" id="PTHR19136">
    <property type="entry name" value="MOLYBDENUM COFACTOR GUANYLYLTRANSFERASE"/>
    <property type="match status" value="1"/>
</dbReference>
<dbReference type="PANTHER" id="PTHR19136:SF81">
    <property type="entry name" value="MOLYBDENUM COFACTOR GUANYLYLTRANSFERASE"/>
    <property type="match status" value="1"/>
</dbReference>
<dbReference type="Pfam" id="PF12804">
    <property type="entry name" value="NTP_transf_3"/>
    <property type="match status" value="1"/>
</dbReference>
<dbReference type="SUPFAM" id="SSF53448">
    <property type="entry name" value="Nucleotide-diphospho-sugar transferases"/>
    <property type="match status" value="1"/>
</dbReference>
<evidence type="ECO:0000255" key="1">
    <source>
        <dbReference type="HAMAP-Rule" id="MF_00316"/>
    </source>
</evidence>
<comment type="function">
    <text evidence="1">Transfers a GMP moiety from GTP to Mo-molybdopterin (Mo-MPT) cofactor (Moco or molybdenum cofactor) to form Mo-molybdopterin guanine dinucleotide (Mo-MGD) cofactor.</text>
</comment>
<comment type="catalytic activity">
    <reaction evidence="1">
        <text>Mo-molybdopterin + GTP + H(+) = Mo-molybdopterin guanine dinucleotide + diphosphate</text>
        <dbReference type="Rhea" id="RHEA:34243"/>
        <dbReference type="ChEBI" id="CHEBI:15378"/>
        <dbReference type="ChEBI" id="CHEBI:33019"/>
        <dbReference type="ChEBI" id="CHEBI:37565"/>
        <dbReference type="ChEBI" id="CHEBI:71302"/>
        <dbReference type="ChEBI" id="CHEBI:71310"/>
        <dbReference type="EC" id="2.7.7.77"/>
    </reaction>
</comment>
<comment type="cofactor">
    <cofactor evidence="1">
        <name>Mg(2+)</name>
        <dbReference type="ChEBI" id="CHEBI:18420"/>
    </cofactor>
</comment>
<comment type="subunit">
    <text evidence="1">Monomer.</text>
</comment>
<comment type="subcellular location">
    <subcellularLocation>
        <location evidence="1">Cytoplasm</location>
    </subcellularLocation>
</comment>
<comment type="domain">
    <text evidence="1">The N-terminal domain determines nucleotide recognition and specific binding, while the C-terminal domain determines the specific binding to the target protein.</text>
</comment>
<comment type="similarity">
    <text evidence="1">Belongs to the MobA family.</text>
</comment>
<organism>
    <name type="scientific">Pseudomonas syringae pv. syringae (strain B728a)</name>
    <dbReference type="NCBI Taxonomy" id="205918"/>
    <lineage>
        <taxon>Bacteria</taxon>
        <taxon>Pseudomonadati</taxon>
        <taxon>Pseudomonadota</taxon>
        <taxon>Gammaproteobacteria</taxon>
        <taxon>Pseudomonadales</taxon>
        <taxon>Pseudomonadaceae</taxon>
        <taxon>Pseudomonas</taxon>
        <taxon>Pseudomonas syringae</taxon>
    </lineage>
</organism>
<feature type="chain" id="PRO_1000019136" description="Molybdenum cofactor guanylyltransferase">
    <location>
        <begin position="1"/>
        <end position="201"/>
    </location>
</feature>
<feature type="binding site" evidence="1">
    <location>
        <begin position="15"/>
        <end position="17"/>
    </location>
    <ligand>
        <name>GTP</name>
        <dbReference type="ChEBI" id="CHEBI:37565"/>
    </ligand>
</feature>
<feature type="binding site" evidence="1">
    <location>
        <position position="28"/>
    </location>
    <ligand>
        <name>GTP</name>
        <dbReference type="ChEBI" id="CHEBI:37565"/>
    </ligand>
</feature>
<feature type="binding site" evidence="1">
    <location>
        <position position="74"/>
    </location>
    <ligand>
        <name>GTP</name>
        <dbReference type="ChEBI" id="CHEBI:37565"/>
    </ligand>
</feature>
<feature type="binding site" evidence="1">
    <location>
        <position position="104"/>
    </location>
    <ligand>
        <name>GTP</name>
        <dbReference type="ChEBI" id="CHEBI:37565"/>
    </ligand>
</feature>
<feature type="binding site" evidence="1">
    <location>
        <position position="104"/>
    </location>
    <ligand>
        <name>Mg(2+)</name>
        <dbReference type="ChEBI" id="CHEBI:18420"/>
    </ligand>
</feature>
<accession>Q4ZUJ4</accession>
<name>MOBA_PSEU2</name>
<reference key="1">
    <citation type="journal article" date="2005" name="Proc. Natl. Acad. Sci. U.S.A.">
        <title>Comparison of the complete genome sequences of Pseudomonas syringae pv. syringae B728a and pv. tomato DC3000.</title>
        <authorList>
            <person name="Feil H."/>
            <person name="Feil W.S."/>
            <person name="Chain P."/>
            <person name="Larimer F."/>
            <person name="Dibartolo G."/>
            <person name="Copeland A."/>
            <person name="Lykidis A."/>
            <person name="Trong S."/>
            <person name="Nolan M."/>
            <person name="Goltsman E."/>
            <person name="Thiel J."/>
            <person name="Malfatti S."/>
            <person name="Loper J.E."/>
            <person name="Lapidus A."/>
            <person name="Detter J.C."/>
            <person name="Land M."/>
            <person name="Richardson P.M."/>
            <person name="Kyrpides N.C."/>
            <person name="Ivanova N."/>
            <person name="Lindow S.E."/>
        </authorList>
    </citation>
    <scope>NUCLEOTIDE SEQUENCE [LARGE SCALE GENOMIC DNA]</scope>
    <source>
        <strain>B728a</strain>
    </source>
</reference>
<sequence length="201" mass="22281">MNVPAPLPPCSILLLAGGRGQRMGGRDKGLIEWQGAALIEHLHRLTRPLTDDLIISCNRNIDRYARYADRLVQDDDTDFNGPLAGIRAALPLARHRWLLILPCDVPLVDAALLRALREKASEYPERPIMVREGQHWQPLLGMIPVAHAATLEAAWQAGERSPRRALEPLQPVALQLEAGDPRLANLNTPCLLTGISENRNK</sequence>
<protein>
    <recommendedName>
        <fullName evidence="1">Molybdenum cofactor guanylyltransferase</fullName>
        <shortName evidence="1">MoCo guanylyltransferase</shortName>
        <ecNumber evidence="1">2.7.7.77</ecNumber>
    </recommendedName>
    <alternativeName>
        <fullName evidence="1">GTP:molybdopterin guanylyltransferase</fullName>
    </alternativeName>
    <alternativeName>
        <fullName evidence="1">Mo-MPT guanylyltransferase</fullName>
    </alternativeName>
    <alternativeName>
        <fullName evidence="1">Molybdopterin guanylyltransferase</fullName>
    </alternativeName>
    <alternativeName>
        <fullName evidence="1">Molybdopterin-guanine dinucleotide synthase</fullName>
        <shortName evidence="1">MGD synthase</shortName>
    </alternativeName>
</protein>